<organism>
    <name type="scientific">Xenopus laevis</name>
    <name type="common">African clawed frog</name>
    <dbReference type="NCBI Taxonomy" id="8355"/>
    <lineage>
        <taxon>Eukaryota</taxon>
        <taxon>Metazoa</taxon>
        <taxon>Chordata</taxon>
        <taxon>Craniata</taxon>
        <taxon>Vertebrata</taxon>
        <taxon>Euteleostomi</taxon>
        <taxon>Amphibia</taxon>
        <taxon>Batrachia</taxon>
        <taxon>Anura</taxon>
        <taxon>Pipoidea</taxon>
        <taxon>Pipidae</taxon>
        <taxon>Xenopodinae</taxon>
        <taxon>Xenopus</taxon>
        <taxon>Xenopus</taxon>
    </lineage>
</organism>
<accession>Q4V853</accession>
<reference key="1">
    <citation type="submission" date="2005-06" db="EMBL/GenBank/DDBJ databases">
        <authorList>
            <consortium name="NIH - Xenopus Gene Collection (XGC) project"/>
        </authorList>
    </citation>
    <scope>NUCLEOTIDE SEQUENCE [LARGE SCALE MRNA]</scope>
    <source>
        <tissue>Spleen</tissue>
    </source>
</reference>
<dbReference type="EMBL" id="BC097539">
    <property type="protein sequence ID" value="AAH97539.1"/>
    <property type="molecule type" value="mRNA"/>
</dbReference>
<dbReference type="RefSeq" id="NP_001165189.1">
    <property type="nucleotide sequence ID" value="NM_001171718.1"/>
</dbReference>
<dbReference type="DNASU" id="735102"/>
<dbReference type="GeneID" id="735102"/>
<dbReference type="KEGG" id="xla:735102"/>
<dbReference type="AGR" id="Xenbase:XB-GENE-18006014"/>
<dbReference type="CTD" id="735102"/>
<dbReference type="Xenbase" id="XB-GENE-18006014">
    <property type="gene designation" value="cdc42se2.S"/>
</dbReference>
<dbReference type="OMA" id="INDCPGA"/>
<dbReference type="OrthoDB" id="5559822at2759"/>
<dbReference type="Proteomes" id="UP000186698">
    <property type="component" value="Chromosome 3S"/>
</dbReference>
<dbReference type="Bgee" id="735102">
    <property type="expression patterns" value="Expressed in spleen and 19 other cell types or tissues"/>
</dbReference>
<dbReference type="GO" id="GO:0005737">
    <property type="term" value="C:cytoplasm"/>
    <property type="evidence" value="ECO:0007669"/>
    <property type="project" value="UniProtKB-KW"/>
</dbReference>
<dbReference type="GO" id="GO:0005856">
    <property type="term" value="C:cytoskeleton"/>
    <property type="evidence" value="ECO:0007669"/>
    <property type="project" value="UniProtKB-SubCell"/>
</dbReference>
<dbReference type="GO" id="GO:0005886">
    <property type="term" value="C:plasma membrane"/>
    <property type="evidence" value="ECO:0000250"/>
    <property type="project" value="UniProtKB"/>
</dbReference>
<dbReference type="GO" id="GO:0031267">
    <property type="term" value="F:small GTPase binding"/>
    <property type="evidence" value="ECO:0007669"/>
    <property type="project" value="InterPro"/>
</dbReference>
<dbReference type="GO" id="GO:0008360">
    <property type="term" value="P:regulation of cell shape"/>
    <property type="evidence" value="ECO:0007669"/>
    <property type="project" value="UniProtKB-KW"/>
</dbReference>
<dbReference type="GO" id="GO:0035023">
    <property type="term" value="P:regulation of Rho protein signal transduction"/>
    <property type="evidence" value="ECO:0007669"/>
    <property type="project" value="InterPro"/>
</dbReference>
<dbReference type="GO" id="GO:0009966">
    <property type="term" value="P:regulation of signal transduction"/>
    <property type="evidence" value="ECO:0000250"/>
    <property type="project" value="UniProtKB"/>
</dbReference>
<dbReference type="CDD" id="cd00132">
    <property type="entry name" value="CRIB"/>
    <property type="match status" value="1"/>
</dbReference>
<dbReference type="FunFam" id="3.90.810.10:FF:000004">
    <property type="entry name" value="CDC42 small effector protein 2"/>
    <property type="match status" value="1"/>
</dbReference>
<dbReference type="Gene3D" id="3.90.810.10">
    <property type="entry name" value="CRIB domain"/>
    <property type="match status" value="1"/>
</dbReference>
<dbReference type="InterPro" id="IPR000095">
    <property type="entry name" value="CRIB_dom"/>
</dbReference>
<dbReference type="InterPro" id="IPR036936">
    <property type="entry name" value="CRIB_dom_sf"/>
</dbReference>
<dbReference type="InterPro" id="IPR039056">
    <property type="entry name" value="SPEC"/>
</dbReference>
<dbReference type="PANTHER" id="PTHR13502">
    <property type="entry name" value="CDC42 SMALL EFFECTOR PROTEIN HOMOLOG"/>
    <property type="match status" value="1"/>
</dbReference>
<dbReference type="PANTHER" id="PTHR13502:SF7">
    <property type="entry name" value="CRIB DOMAIN-CONTAINING PROTEIN"/>
    <property type="match status" value="1"/>
</dbReference>
<dbReference type="Pfam" id="PF00786">
    <property type="entry name" value="PBD"/>
    <property type="match status" value="1"/>
</dbReference>
<dbReference type="PROSITE" id="PS50108">
    <property type="entry name" value="CRIB"/>
    <property type="match status" value="1"/>
</dbReference>
<gene>
    <name type="primary">cdc42se2-c</name>
</gene>
<evidence type="ECO:0000250" key="1"/>
<evidence type="ECO:0000255" key="2">
    <source>
        <dbReference type="PROSITE-ProRule" id="PRU00057"/>
    </source>
</evidence>
<evidence type="ECO:0000305" key="3"/>
<name>C4S2C_XENLA</name>
<sequence length="75" mass="8218">MTEFLFCFSCCIGEQPQPKRRRRIDRSMIGEPMNFVHTAHVGSGDANTGFAMGGSFQDQMKSKGGYTPGISEVAL</sequence>
<comment type="function">
    <text evidence="1">Probably involved in the organization of the actin cytoskeleton by acting downstream of CDC42, inducing actin filament assembly.</text>
</comment>
<comment type="subcellular location">
    <subcellularLocation>
        <location evidence="1">Cytoplasm</location>
        <location evidence="1">Cytoskeleton</location>
    </subcellularLocation>
    <subcellularLocation>
        <location evidence="1">Cell membrane</location>
        <topology evidence="1">Lipid-anchor</topology>
    </subcellularLocation>
</comment>
<comment type="similarity">
    <text evidence="3">Belongs to the CDC42SE/SPEC family.</text>
</comment>
<feature type="chain" id="PRO_0000334646" description="CDC42 small effector protein 2-C">
    <location>
        <begin position="1"/>
        <end position="75"/>
    </location>
</feature>
<feature type="domain" description="CRIB" evidence="2">
    <location>
        <begin position="29"/>
        <end position="42"/>
    </location>
</feature>
<feature type="lipid moiety-binding region" description="S-palmitoyl cysteine" evidence="1">
    <location>
        <position position="10"/>
    </location>
</feature>
<feature type="lipid moiety-binding region" description="S-palmitoyl cysteine" evidence="1">
    <location>
        <position position="11"/>
    </location>
</feature>
<keyword id="KW-1003">Cell membrane</keyword>
<keyword id="KW-0133">Cell shape</keyword>
<keyword id="KW-0963">Cytoplasm</keyword>
<keyword id="KW-0206">Cytoskeleton</keyword>
<keyword id="KW-0449">Lipoprotein</keyword>
<keyword id="KW-0472">Membrane</keyword>
<keyword id="KW-0564">Palmitate</keyword>
<keyword id="KW-1185">Reference proteome</keyword>
<proteinExistence type="inferred from homology"/>
<protein>
    <recommendedName>
        <fullName>CDC42 small effector protein 2-C</fullName>
    </recommendedName>
</protein>